<name>RL18_SACI1</name>
<proteinExistence type="inferred from homology"/>
<feature type="chain" id="PRO_1000214688" description="Large ribosomal subunit protein uL18">
    <location>
        <begin position="1"/>
        <end position="196"/>
    </location>
</feature>
<protein>
    <recommendedName>
        <fullName evidence="1">Large ribosomal subunit protein uL18</fullName>
    </recommendedName>
    <alternativeName>
        <fullName evidence="2">50S ribosomal protein L18</fullName>
    </alternativeName>
</protein>
<gene>
    <name evidence="1" type="primary">rpl18</name>
    <name type="ordered locus">YN1551_1409</name>
</gene>
<evidence type="ECO:0000255" key="1">
    <source>
        <dbReference type="HAMAP-Rule" id="MF_01337"/>
    </source>
</evidence>
<evidence type="ECO:0000305" key="2"/>
<reference key="1">
    <citation type="journal article" date="2009" name="Proc. Natl. Acad. Sci. U.S.A.">
        <title>Biogeography of the Sulfolobus islandicus pan-genome.</title>
        <authorList>
            <person name="Reno M.L."/>
            <person name="Held N.L."/>
            <person name="Fields C.J."/>
            <person name="Burke P.V."/>
            <person name="Whitaker R.J."/>
        </authorList>
    </citation>
    <scope>NUCLEOTIDE SEQUENCE [LARGE SCALE GENOMIC DNA]</scope>
    <source>
        <strain>Y.N.15.51 / Yellowstone #2</strain>
    </source>
</reference>
<sequence>MANGPNYKIKHRRRREGKTNYYKRYVYVISKQIRFIVRITNKYVIVQIAKIDPKGDIMVASAHSSELTKKFEWKGDENNTPSAYLTGYLAALRAVKKGVTECVADIGLHVPSKGNKVFYAIKGAIDAGLKIPIGDISIENDRIKGEHIAKYAEKLKSENLDLYNKLFSRYLGRGLNPENLPSHFEEILNKIKSSGG</sequence>
<organism>
    <name type="scientific">Saccharolobus islandicus (strain Y.N.15.51 / Yellowstone #2)</name>
    <name type="common">Sulfolobus islandicus</name>
    <dbReference type="NCBI Taxonomy" id="419942"/>
    <lineage>
        <taxon>Archaea</taxon>
        <taxon>Thermoproteota</taxon>
        <taxon>Thermoprotei</taxon>
        <taxon>Sulfolobales</taxon>
        <taxon>Sulfolobaceae</taxon>
        <taxon>Saccharolobus</taxon>
    </lineage>
</organism>
<keyword id="KW-0687">Ribonucleoprotein</keyword>
<keyword id="KW-0689">Ribosomal protein</keyword>
<keyword id="KW-0694">RNA-binding</keyword>
<keyword id="KW-0699">rRNA-binding</keyword>
<dbReference type="EMBL" id="CP001404">
    <property type="protein sequence ID" value="ACP48500.1"/>
    <property type="molecule type" value="Genomic_DNA"/>
</dbReference>
<dbReference type="RefSeq" id="WP_012717439.1">
    <property type="nucleotide sequence ID" value="NC_012623.1"/>
</dbReference>
<dbReference type="SMR" id="C3NH90"/>
<dbReference type="GeneID" id="7809801"/>
<dbReference type="KEGG" id="sin:YN1551_1409"/>
<dbReference type="HOGENOM" id="CLU_056222_2_0_2"/>
<dbReference type="Proteomes" id="UP000006818">
    <property type="component" value="Chromosome"/>
</dbReference>
<dbReference type="GO" id="GO:0022625">
    <property type="term" value="C:cytosolic large ribosomal subunit"/>
    <property type="evidence" value="ECO:0007669"/>
    <property type="project" value="TreeGrafter"/>
</dbReference>
<dbReference type="GO" id="GO:0008097">
    <property type="term" value="F:5S rRNA binding"/>
    <property type="evidence" value="ECO:0007669"/>
    <property type="project" value="InterPro"/>
</dbReference>
<dbReference type="GO" id="GO:0003735">
    <property type="term" value="F:structural constituent of ribosome"/>
    <property type="evidence" value="ECO:0007669"/>
    <property type="project" value="InterPro"/>
</dbReference>
<dbReference type="GO" id="GO:0000027">
    <property type="term" value="P:ribosomal large subunit assembly"/>
    <property type="evidence" value="ECO:0007669"/>
    <property type="project" value="TreeGrafter"/>
</dbReference>
<dbReference type="GO" id="GO:0006412">
    <property type="term" value="P:translation"/>
    <property type="evidence" value="ECO:0007669"/>
    <property type="project" value="UniProtKB-UniRule"/>
</dbReference>
<dbReference type="CDD" id="cd00432">
    <property type="entry name" value="Ribosomal_L18_L5e"/>
    <property type="match status" value="1"/>
</dbReference>
<dbReference type="FunFam" id="3.30.420.100:FF:000008">
    <property type="entry name" value="50S ribosomal protein L18"/>
    <property type="match status" value="1"/>
</dbReference>
<dbReference type="Gene3D" id="3.30.420.100">
    <property type="match status" value="1"/>
</dbReference>
<dbReference type="HAMAP" id="MF_01337_A">
    <property type="entry name" value="Ribosomal_uL18_A"/>
    <property type="match status" value="1"/>
</dbReference>
<dbReference type="InterPro" id="IPR005485">
    <property type="entry name" value="Rbsml_uL18_euk"/>
</dbReference>
<dbReference type="NCBIfam" id="NF006342">
    <property type="entry name" value="PRK08569.1"/>
    <property type="match status" value="1"/>
</dbReference>
<dbReference type="PANTHER" id="PTHR23410:SF12">
    <property type="entry name" value="LARGE RIBOSOMAL SUBUNIT PROTEIN UL18"/>
    <property type="match status" value="1"/>
</dbReference>
<dbReference type="PANTHER" id="PTHR23410">
    <property type="entry name" value="RIBOSOMAL PROTEIN L5-RELATED"/>
    <property type="match status" value="1"/>
</dbReference>
<dbReference type="Pfam" id="PF17144">
    <property type="entry name" value="Ribosomal_L5e"/>
    <property type="match status" value="2"/>
</dbReference>
<dbReference type="SUPFAM" id="SSF53137">
    <property type="entry name" value="Translational machinery components"/>
    <property type="match status" value="1"/>
</dbReference>
<comment type="function">
    <text evidence="1">This is one of the proteins that bind and probably mediate the attachment of the 5S RNA into the large ribosomal subunit, where it forms part of the central protuberance.</text>
</comment>
<comment type="subunit">
    <text evidence="1">Part of the 50S ribosomal subunit. Contacts the 5S and 23S rRNAs.</text>
</comment>
<comment type="similarity">
    <text evidence="1">Belongs to the universal ribosomal protein uL18 family.</text>
</comment>
<accession>C3NH90</accession>